<gene>
    <name type="primary">CYP51</name>
</gene>
<sequence length="453" mass="51644">RPPPTIPGAPVVGGLLRFLRGPIPLIRAEYARLGPVFTVPILTRRITFLIGPDVSAHFFKSNESDMSQQEVYRFNVPTFGPGVVFDVDYQVRQEQFRFFTEALRANKLRSYVDQMVAEAEEYFSKWGESGTVDLKYELEHLIILTASRCLLGREVREKLFDDVSALFHDLDNGMLPISVIFPYLPIPAHRRRDQARTRLAEIFATIIKSRKASGQSEEDMLQCFIDSKYKNGRQTTESEVTGLLIAALFAGQHTSSITSTWTGAYLLKFQQYFAEAVEEQKEVMKRHGDKIDHDILAEMDVLYRCIKEALRLHPPLIMLLRQSHSDFSVTTREGKEFDIPKGHIVATSPAFANRLPHIFKNPDSYDPDRFAAGREEDKVAGAFSYISFGGGRHGCLGEPFAYLQIKAIWTHLLRNFEFELVSPFPENDWNAMVVGIKGEVMVNYKRRKLIVDN</sequence>
<reference key="1">
    <citation type="journal article" date="1997" name="Biochem. Biophys. Res. Commun.">
        <title>Cloning and functional expression in yeast of a cDNA coding for an obtusifoliol 14alpha-demethylase (CYP51) in wheat.</title>
        <authorList>
            <person name="Cabello-Hurtado F."/>
            <person name="Zimmerlin A."/>
            <person name="Rahier A."/>
            <person name="Taton M."/>
            <person name="Derose R."/>
            <person name="Nedelkina S."/>
            <person name="Batard Y."/>
            <person name="Durst F."/>
            <person name="Pallett K.E."/>
            <person name="Werck-Reichhart D."/>
        </authorList>
    </citation>
    <scope>NUCLEOTIDE SEQUENCE [MRNA]</scope>
    <source>
        <strain>cv. Darius</strain>
        <tissue>Shoot</tissue>
    </source>
</reference>
<keyword id="KW-0349">Heme</keyword>
<keyword id="KW-0408">Iron</keyword>
<keyword id="KW-0444">Lipid biosynthesis</keyword>
<keyword id="KW-0443">Lipid metabolism</keyword>
<keyword id="KW-0472">Membrane</keyword>
<keyword id="KW-0479">Metal-binding</keyword>
<keyword id="KW-0489">Methyltransferase</keyword>
<keyword id="KW-0503">Monooxygenase</keyword>
<keyword id="KW-0560">Oxidoreductase</keyword>
<keyword id="KW-1185">Reference proteome</keyword>
<keyword id="KW-0752">Steroid biosynthesis</keyword>
<keyword id="KW-0753">Steroid metabolism</keyword>
<keyword id="KW-0756">Sterol biosynthesis</keyword>
<keyword id="KW-1207">Sterol metabolism</keyword>
<keyword id="KW-0808">Transferase</keyword>
<protein>
    <recommendedName>
        <fullName>Obtusifoliol 14-alpha demethylase</fullName>
        <ecNumber>1.14.14.154</ecNumber>
    </recommendedName>
    <alternativeName>
        <fullName>CYPLI</fullName>
    </alternativeName>
    <alternativeName>
        <fullName>Cytochrome P450 51</fullName>
    </alternativeName>
    <alternativeName>
        <fullName>Cytochrome P450-LIA1</fullName>
    </alternativeName>
</protein>
<feature type="chain" id="PRO_0000052014" description="Obtusifoliol 14-alpha demethylase">
    <location>
        <begin position="1" status="less than"/>
        <end position="453"/>
    </location>
</feature>
<feature type="binding site" description="axial binding residue" evidence="1">
    <location>
        <position position="395"/>
    </location>
    <ligand>
        <name>heme</name>
        <dbReference type="ChEBI" id="CHEBI:30413"/>
    </ligand>
    <ligandPart>
        <name>Fe</name>
        <dbReference type="ChEBI" id="CHEBI:18248"/>
    </ligandPart>
</feature>
<feature type="sequence variant" description="In clone W516.">
    <location>
        <position position="150"/>
    </location>
</feature>
<feature type="sequence variant" description="In clone W516.">
    <original>L</original>
    <variation>Q</variation>
    <location>
        <position position="175"/>
    </location>
</feature>
<feature type="sequence variant" description="In clone W516.">
    <original>N</original>
    <variation>S</variation>
    <location>
        <position position="443"/>
    </location>
</feature>
<feature type="sequence variant" description="In clone W516.">
    <original>I</original>
    <variation>V</variation>
    <location>
        <position position="450"/>
    </location>
</feature>
<feature type="non-terminal residue">
    <location>
        <position position="1"/>
    </location>
</feature>
<comment type="function">
    <text>Catalyzes the 14-alpha demethylation of obtusifoliol to 4 alpha-methyl-5 alpha-ergosta-8,14,24(28)-trien-3 beta-ol.</text>
</comment>
<comment type="catalytic activity">
    <reaction>
        <text>a 14alpha-methyl steroid + 3 reduced [NADPH--hemoprotein reductase] + 3 O2 = a Delta(14) steroid + formate + 3 oxidized [NADPH--hemoprotein reductase] + 4 H2O + 4 H(+)</text>
        <dbReference type="Rhea" id="RHEA:54028"/>
        <dbReference type="Rhea" id="RHEA-COMP:11964"/>
        <dbReference type="Rhea" id="RHEA-COMP:11965"/>
        <dbReference type="ChEBI" id="CHEBI:15377"/>
        <dbReference type="ChEBI" id="CHEBI:15378"/>
        <dbReference type="ChEBI" id="CHEBI:15379"/>
        <dbReference type="ChEBI" id="CHEBI:15740"/>
        <dbReference type="ChEBI" id="CHEBI:57618"/>
        <dbReference type="ChEBI" id="CHEBI:58210"/>
        <dbReference type="ChEBI" id="CHEBI:138029"/>
        <dbReference type="ChEBI" id="CHEBI:138031"/>
        <dbReference type="EC" id="1.14.14.154"/>
    </reaction>
</comment>
<comment type="cofactor">
    <cofactor>
        <name>heme</name>
        <dbReference type="ChEBI" id="CHEBI:30413"/>
    </cofactor>
</comment>
<comment type="pathway">
    <text>Steroid biosynthesis; zymosterol biosynthesis; zymosterol from lanosterol: step 1/6.</text>
</comment>
<comment type="subcellular location">
    <subcellularLocation>
        <location evidence="2">Membrane</location>
    </subcellularLocation>
    <subcellularLocation>
        <location>Membrane</location>
        <topology>Single-pass membrane protein</topology>
    </subcellularLocation>
</comment>
<comment type="similarity">
    <text evidence="2">Belongs to the cytochrome P450 family.</text>
</comment>
<dbReference type="EC" id="1.14.14.154"/>
<dbReference type="EMBL" id="Y09291">
    <property type="protein sequence ID" value="CAA70475.1"/>
    <property type="molecule type" value="mRNA"/>
</dbReference>
<dbReference type="EMBL" id="Y09292">
    <property type="protein sequence ID" value="CAA70476.1"/>
    <property type="molecule type" value="mRNA"/>
</dbReference>
<dbReference type="PIR" id="T06475">
    <property type="entry name" value="T06475"/>
</dbReference>
<dbReference type="SMR" id="P93596"/>
<dbReference type="STRING" id="4565.P93596"/>
<dbReference type="PaxDb" id="4565-Traes_4BS_1D0369514.2"/>
<dbReference type="eggNOG" id="KOG0684">
    <property type="taxonomic scope" value="Eukaryota"/>
</dbReference>
<dbReference type="UniPathway" id="UPA00770">
    <property type="reaction ID" value="UER00754"/>
</dbReference>
<dbReference type="Proteomes" id="UP000019116">
    <property type="component" value="Unplaced"/>
</dbReference>
<dbReference type="ExpressionAtlas" id="P93596">
    <property type="expression patterns" value="baseline and differential"/>
</dbReference>
<dbReference type="GO" id="GO:0016020">
    <property type="term" value="C:membrane"/>
    <property type="evidence" value="ECO:0007669"/>
    <property type="project" value="UniProtKB-SubCell"/>
</dbReference>
<dbReference type="GO" id="GO:0020037">
    <property type="term" value="F:heme binding"/>
    <property type="evidence" value="ECO:0007669"/>
    <property type="project" value="InterPro"/>
</dbReference>
<dbReference type="GO" id="GO:0005506">
    <property type="term" value="F:iron ion binding"/>
    <property type="evidence" value="ECO:0007669"/>
    <property type="project" value="InterPro"/>
</dbReference>
<dbReference type="GO" id="GO:0008168">
    <property type="term" value="F:methyltransferase activity"/>
    <property type="evidence" value="ECO:0007669"/>
    <property type="project" value="UniProtKB-KW"/>
</dbReference>
<dbReference type="GO" id="GO:0016491">
    <property type="term" value="F:oxidoreductase activity"/>
    <property type="evidence" value="ECO:0000318"/>
    <property type="project" value="GO_Central"/>
</dbReference>
<dbReference type="GO" id="GO:0008398">
    <property type="term" value="F:sterol 14-demethylase activity"/>
    <property type="evidence" value="ECO:0007669"/>
    <property type="project" value="UniProtKB-EC"/>
</dbReference>
<dbReference type="GO" id="GO:0032259">
    <property type="term" value="P:methylation"/>
    <property type="evidence" value="ECO:0007669"/>
    <property type="project" value="UniProtKB-KW"/>
</dbReference>
<dbReference type="GO" id="GO:0016126">
    <property type="term" value="P:sterol biosynthetic process"/>
    <property type="evidence" value="ECO:0000318"/>
    <property type="project" value="GO_Central"/>
</dbReference>
<dbReference type="CDD" id="cd11042">
    <property type="entry name" value="CYP51-like"/>
    <property type="match status" value="1"/>
</dbReference>
<dbReference type="FunFam" id="1.10.630.10:FF:000028">
    <property type="entry name" value="Cytochrome p450 51g1"/>
    <property type="match status" value="1"/>
</dbReference>
<dbReference type="Gene3D" id="1.10.630.10">
    <property type="entry name" value="Cytochrome P450"/>
    <property type="match status" value="1"/>
</dbReference>
<dbReference type="InterPro" id="IPR050529">
    <property type="entry name" value="CYP450_sterol_14alpha_dmase"/>
</dbReference>
<dbReference type="InterPro" id="IPR001128">
    <property type="entry name" value="Cyt_P450"/>
</dbReference>
<dbReference type="InterPro" id="IPR017972">
    <property type="entry name" value="Cyt_P450_CS"/>
</dbReference>
<dbReference type="InterPro" id="IPR002403">
    <property type="entry name" value="Cyt_P450_E_grp-IV"/>
</dbReference>
<dbReference type="InterPro" id="IPR036396">
    <property type="entry name" value="Cyt_P450_sf"/>
</dbReference>
<dbReference type="PANTHER" id="PTHR24304:SF2">
    <property type="entry name" value="24-HYDROXYCHOLESTEROL 7-ALPHA-HYDROXYLASE"/>
    <property type="match status" value="1"/>
</dbReference>
<dbReference type="PANTHER" id="PTHR24304">
    <property type="entry name" value="CYTOCHROME P450 FAMILY 7"/>
    <property type="match status" value="1"/>
</dbReference>
<dbReference type="Pfam" id="PF00067">
    <property type="entry name" value="p450"/>
    <property type="match status" value="1"/>
</dbReference>
<dbReference type="PRINTS" id="PR00465">
    <property type="entry name" value="EP450IV"/>
</dbReference>
<dbReference type="PRINTS" id="PR00385">
    <property type="entry name" value="P450"/>
</dbReference>
<dbReference type="SUPFAM" id="SSF48264">
    <property type="entry name" value="Cytochrome P450"/>
    <property type="match status" value="1"/>
</dbReference>
<dbReference type="PROSITE" id="PS00086">
    <property type="entry name" value="CYTOCHROME_P450"/>
    <property type="match status" value="1"/>
</dbReference>
<proteinExistence type="evidence at transcript level"/>
<organism>
    <name type="scientific">Triticum aestivum</name>
    <name type="common">Wheat</name>
    <dbReference type="NCBI Taxonomy" id="4565"/>
    <lineage>
        <taxon>Eukaryota</taxon>
        <taxon>Viridiplantae</taxon>
        <taxon>Streptophyta</taxon>
        <taxon>Embryophyta</taxon>
        <taxon>Tracheophyta</taxon>
        <taxon>Spermatophyta</taxon>
        <taxon>Magnoliopsida</taxon>
        <taxon>Liliopsida</taxon>
        <taxon>Poales</taxon>
        <taxon>Poaceae</taxon>
        <taxon>BOP clade</taxon>
        <taxon>Pooideae</taxon>
        <taxon>Triticodae</taxon>
        <taxon>Triticeae</taxon>
        <taxon>Triticinae</taxon>
        <taxon>Triticum</taxon>
    </lineage>
</organism>
<evidence type="ECO:0000250" key="1"/>
<evidence type="ECO:0000305" key="2"/>
<name>CP51_WHEAT</name>
<accession>P93596</accession>
<accession>P93595</accession>